<accession>Q7UDF9</accession>
<reference key="1">
    <citation type="journal article" date="2002" name="Nucleic Acids Res.">
        <title>Genome sequence of Shigella flexneri 2a: insights into pathogenicity through comparison with genomes of Escherichia coli K12 and O157.</title>
        <authorList>
            <person name="Jin Q."/>
            <person name="Yuan Z."/>
            <person name="Xu J."/>
            <person name="Wang Y."/>
            <person name="Shen Y."/>
            <person name="Lu W."/>
            <person name="Wang J."/>
            <person name="Liu H."/>
            <person name="Yang J."/>
            <person name="Yang F."/>
            <person name="Zhang X."/>
            <person name="Zhang J."/>
            <person name="Yang G."/>
            <person name="Wu H."/>
            <person name="Qu D."/>
            <person name="Dong J."/>
            <person name="Sun L."/>
            <person name="Xue Y."/>
            <person name="Zhao A."/>
            <person name="Gao Y."/>
            <person name="Zhu J."/>
            <person name="Kan B."/>
            <person name="Ding K."/>
            <person name="Chen S."/>
            <person name="Cheng H."/>
            <person name="Yao Z."/>
            <person name="He B."/>
            <person name="Chen R."/>
            <person name="Ma D."/>
            <person name="Qiang B."/>
            <person name="Wen Y."/>
            <person name="Hou Y."/>
            <person name="Yu J."/>
        </authorList>
    </citation>
    <scope>NUCLEOTIDE SEQUENCE [LARGE SCALE GENOMIC DNA]</scope>
    <source>
        <strain>301 / Serotype 2a</strain>
    </source>
</reference>
<reference key="2">
    <citation type="journal article" date="2003" name="Infect. Immun.">
        <title>Complete genome sequence and comparative genomics of Shigella flexneri serotype 2a strain 2457T.</title>
        <authorList>
            <person name="Wei J."/>
            <person name="Goldberg M.B."/>
            <person name="Burland V."/>
            <person name="Venkatesan M.M."/>
            <person name="Deng W."/>
            <person name="Fournier G."/>
            <person name="Mayhew G.F."/>
            <person name="Plunkett G. III"/>
            <person name="Rose D.J."/>
            <person name="Darling A."/>
            <person name="Mau B."/>
            <person name="Perna N.T."/>
            <person name="Payne S.M."/>
            <person name="Runyen-Janecky L.J."/>
            <person name="Zhou S."/>
            <person name="Schwartz D.C."/>
            <person name="Blattner F.R."/>
        </authorList>
    </citation>
    <scope>NUCLEOTIDE SEQUENCE [LARGE SCALE GENOMIC DNA]</scope>
    <source>
        <strain>ATCC 700930 / 2457T / Serotype 2a</strain>
    </source>
</reference>
<proteinExistence type="inferred from homology"/>
<dbReference type="EMBL" id="AE005674">
    <property type="status" value="NOT_ANNOTATED_CDS"/>
    <property type="molecule type" value="Genomic_DNA"/>
</dbReference>
<dbReference type="EMBL" id="AE014073">
    <property type="protein sequence ID" value="AAP16016.1"/>
    <property type="status" value="ALT_INIT"/>
    <property type="molecule type" value="Genomic_DNA"/>
</dbReference>
<dbReference type="RefSeq" id="WP_000956465.1">
    <property type="nucleotide sequence ID" value="NZ_WPGW01000132.1"/>
</dbReference>
<dbReference type="SMR" id="Q7UDF9"/>
<dbReference type="GeneID" id="93776905"/>
<dbReference type="KEGG" id="sfx:S0500"/>
<dbReference type="PATRIC" id="fig|623.156.peg.3657"/>
<dbReference type="HOGENOM" id="CLU_177638_3_0_6"/>
<dbReference type="Proteomes" id="UP000001006">
    <property type="component" value="Chromosome"/>
</dbReference>
<dbReference type="Proteomes" id="UP000002673">
    <property type="component" value="Chromosome"/>
</dbReference>
<dbReference type="GO" id="GO:0005886">
    <property type="term" value="C:plasma membrane"/>
    <property type="evidence" value="ECO:0007669"/>
    <property type="project" value="UniProtKB-SubCell"/>
</dbReference>
<dbReference type="InterPro" id="IPR000021">
    <property type="entry name" value="Hok/gef_toxin"/>
</dbReference>
<dbReference type="InterPro" id="IPR018084">
    <property type="entry name" value="Hok/gef_toxin_CS"/>
</dbReference>
<dbReference type="Pfam" id="PF01848">
    <property type="entry name" value="HOK_GEF"/>
    <property type="match status" value="1"/>
</dbReference>
<dbReference type="PRINTS" id="PR00281">
    <property type="entry name" value="HOKGEFTOXIC"/>
</dbReference>
<dbReference type="PROSITE" id="PS00556">
    <property type="entry name" value="HOK_GEF"/>
    <property type="match status" value="1"/>
</dbReference>
<evidence type="ECO:0000250" key="1">
    <source>
        <dbReference type="UniProtKB" id="P0ACG4"/>
    </source>
</evidence>
<evidence type="ECO:0000255" key="2"/>
<evidence type="ECO:0000305" key="3"/>
<gene>
    <name type="primary">hokE</name>
    <name type="ordered locus">SF0494.2</name>
    <name type="ordered locus">S0500</name>
</gene>
<name>HOKE_SHIFL</name>
<keyword id="KW-0997">Cell inner membrane</keyword>
<keyword id="KW-1003">Cell membrane</keyword>
<keyword id="KW-0472">Membrane</keyword>
<keyword id="KW-1185">Reference proteome</keyword>
<keyword id="KW-1277">Toxin-antitoxin system</keyword>
<keyword id="KW-0812">Transmembrane</keyword>
<keyword id="KW-1133">Transmembrane helix</keyword>
<protein>
    <recommendedName>
        <fullName>Protein HokE</fullName>
    </recommendedName>
</protein>
<feature type="chain" id="PRO_0000199038" description="Protein HokE">
    <location>
        <begin position="1"/>
        <end position="50"/>
    </location>
</feature>
<feature type="transmembrane region" description="Helical" evidence="2">
    <location>
        <begin position="5"/>
        <end position="25"/>
    </location>
</feature>
<comment type="function">
    <text evidence="1">Toxic component of a type I toxin-antitoxin (TA) system (By similarity). When overexpressed kills cells within minutes; causes collapse of the transmembrane potential and arrest of respiration (By similarity). Its toxic effect is probably neutralized by an antisense antitoxin Sok RNA (By similarity).</text>
</comment>
<comment type="subcellular location">
    <subcellularLocation>
        <location evidence="1">Cell inner membrane</location>
        <topology evidence="3">Single-pass membrane protein</topology>
    </subcellularLocation>
</comment>
<comment type="similarity">
    <text evidence="3">Belongs to the Hok/Gef family.</text>
</comment>
<comment type="sequence caution" evidence="3">
    <conflict type="erroneous initiation">
        <sequence resource="EMBL-CDS" id="AAP16016"/>
    </conflict>
    <text>Extended N-terminus.</text>
</comment>
<organism>
    <name type="scientific">Shigella flexneri</name>
    <dbReference type="NCBI Taxonomy" id="623"/>
    <lineage>
        <taxon>Bacteria</taxon>
        <taxon>Pseudomonadati</taxon>
        <taxon>Pseudomonadota</taxon>
        <taxon>Gammaproteobacteria</taxon>
        <taxon>Enterobacterales</taxon>
        <taxon>Enterobacteriaceae</taxon>
        <taxon>Shigella</taxon>
    </lineage>
</organism>
<sequence length="50" mass="5592">MLTKYALVAVIVLCLTVLGFTLLVGDSLCEFTVKERNIEFKAVLAYEPKK</sequence>